<reference key="1">
    <citation type="journal article" date="2002" name="Nature">
        <title>The genome sequence of Schizosaccharomyces pombe.</title>
        <authorList>
            <person name="Wood V."/>
            <person name="Gwilliam R."/>
            <person name="Rajandream M.A."/>
            <person name="Lyne M.H."/>
            <person name="Lyne R."/>
            <person name="Stewart A."/>
            <person name="Sgouros J.G."/>
            <person name="Peat N."/>
            <person name="Hayles J."/>
            <person name="Baker S.G."/>
            <person name="Basham D."/>
            <person name="Bowman S."/>
            <person name="Brooks K."/>
            <person name="Brown D."/>
            <person name="Brown S."/>
            <person name="Chillingworth T."/>
            <person name="Churcher C.M."/>
            <person name="Collins M."/>
            <person name="Connor R."/>
            <person name="Cronin A."/>
            <person name="Davis P."/>
            <person name="Feltwell T."/>
            <person name="Fraser A."/>
            <person name="Gentles S."/>
            <person name="Goble A."/>
            <person name="Hamlin N."/>
            <person name="Harris D.E."/>
            <person name="Hidalgo J."/>
            <person name="Hodgson G."/>
            <person name="Holroyd S."/>
            <person name="Hornsby T."/>
            <person name="Howarth S."/>
            <person name="Huckle E.J."/>
            <person name="Hunt S."/>
            <person name="Jagels K."/>
            <person name="James K.D."/>
            <person name="Jones L."/>
            <person name="Jones M."/>
            <person name="Leather S."/>
            <person name="McDonald S."/>
            <person name="McLean J."/>
            <person name="Mooney P."/>
            <person name="Moule S."/>
            <person name="Mungall K.L."/>
            <person name="Murphy L.D."/>
            <person name="Niblett D."/>
            <person name="Odell C."/>
            <person name="Oliver K."/>
            <person name="O'Neil S."/>
            <person name="Pearson D."/>
            <person name="Quail M.A."/>
            <person name="Rabbinowitsch E."/>
            <person name="Rutherford K.M."/>
            <person name="Rutter S."/>
            <person name="Saunders D."/>
            <person name="Seeger K."/>
            <person name="Sharp S."/>
            <person name="Skelton J."/>
            <person name="Simmonds M.N."/>
            <person name="Squares R."/>
            <person name="Squares S."/>
            <person name="Stevens K."/>
            <person name="Taylor K."/>
            <person name="Taylor R.G."/>
            <person name="Tivey A."/>
            <person name="Walsh S.V."/>
            <person name="Warren T."/>
            <person name="Whitehead S."/>
            <person name="Woodward J.R."/>
            <person name="Volckaert G."/>
            <person name="Aert R."/>
            <person name="Robben J."/>
            <person name="Grymonprez B."/>
            <person name="Weltjens I."/>
            <person name="Vanstreels E."/>
            <person name="Rieger M."/>
            <person name="Schaefer M."/>
            <person name="Mueller-Auer S."/>
            <person name="Gabel C."/>
            <person name="Fuchs M."/>
            <person name="Duesterhoeft A."/>
            <person name="Fritzc C."/>
            <person name="Holzer E."/>
            <person name="Moestl D."/>
            <person name="Hilbert H."/>
            <person name="Borzym K."/>
            <person name="Langer I."/>
            <person name="Beck A."/>
            <person name="Lehrach H."/>
            <person name="Reinhardt R."/>
            <person name="Pohl T.M."/>
            <person name="Eger P."/>
            <person name="Zimmermann W."/>
            <person name="Wedler H."/>
            <person name="Wambutt R."/>
            <person name="Purnelle B."/>
            <person name="Goffeau A."/>
            <person name="Cadieu E."/>
            <person name="Dreano S."/>
            <person name="Gloux S."/>
            <person name="Lelaure V."/>
            <person name="Mottier S."/>
            <person name="Galibert F."/>
            <person name="Aves S.J."/>
            <person name="Xiang Z."/>
            <person name="Hunt C."/>
            <person name="Moore K."/>
            <person name="Hurst S.M."/>
            <person name="Lucas M."/>
            <person name="Rochet M."/>
            <person name="Gaillardin C."/>
            <person name="Tallada V.A."/>
            <person name="Garzon A."/>
            <person name="Thode G."/>
            <person name="Daga R.R."/>
            <person name="Cruzado L."/>
            <person name="Jimenez J."/>
            <person name="Sanchez M."/>
            <person name="del Rey F."/>
            <person name="Benito J."/>
            <person name="Dominguez A."/>
            <person name="Revuelta J.L."/>
            <person name="Moreno S."/>
            <person name="Armstrong J."/>
            <person name="Forsburg S.L."/>
            <person name="Cerutti L."/>
            <person name="Lowe T."/>
            <person name="McCombie W.R."/>
            <person name="Paulsen I."/>
            <person name="Potashkin J."/>
            <person name="Shpakovski G.V."/>
            <person name="Ussery D."/>
            <person name="Barrell B.G."/>
            <person name="Nurse P."/>
        </authorList>
    </citation>
    <scope>NUCLEOTIDE SEQUENCE [LARGE SCALE GENOMIC DNA]</scope>
    <source>
        <strain>972 / ATCC 24843</strain>
    </source>
</reference>
<reference key="2">
    <citation type="journal article" date="2007" name="Yeast">
        <title>Mass spectrometric identification of covalently bound cell wall proteins from the fission yeast Schizosaccharomyces pombe.</title>
        <authorList>
            <person name="de Groot P.W.J."/>
            <person name="Yin Q.Y."/>
            <person name="Weig M."/>
            <person name="Sosinska G.J."/>
            <person name="Klis F.M."/>
            <person name="de Koster C.G."/>
        </authorList>
    </citation>
    <scope>SUBCELLULAR LOCATION</scope>
    <scope>IDENTIFICATION BY MASS SPECTROMETRY</scope>
    <scope>PROBABLE GPI-ANCHOR</scope>
</reference>
<gene>
    <name type="primary">gas5</name>
    <name type="ORF">SPAC11E3.13c</name>
</gene>
<dbReference type="EMBL" id="CU329670">
    <property type="protein sequence ID" value="CAB11192.1"/>
    <property type="molecule type" value="Genomic_DNA"/>
</dbReference>
<dbReference type="PIR" id="T37541">
    <property type="entry name" value="T37541"/>
</dbReference>
<dbReference type="RefSeq" id="NP_594938.1">
    <property type="nucleotide sequence ID" value="NM_001020369.2"/>
</dbReference>
<dbReference type="SMR" id="O13692"/>
<dbReference type="BioGRID" id="279427">
    <property type="interactions" value="29"/>
</dbReference>
<dbReference type="FunCoup" id="O13692">
    <property type="interactions" value="85"/>
</dbReference>
<dbReference type="STRING" id="284812.O13692"/>
<dbReference type="CAZy" id="GH72">
    <property type="family name" value="Glycoside Hydrolase Family 72"/>
</dbReference>
<dbReference type="GlyCosmos" id="O13692">
    <property type="glycosylation" value="7 sites, No reported glycans"/>
</dbReference>
<dbReference type="iPTMnet" id="O13692"/>
<dbReference type="PaxDb" id="4896-SPAC11E3.13c.1"/>
<dbReference type="EnsemblFungi" id="SPAC11E3.13c.1">
    <property type="protein sequence ID" value="SPAC11E3.13c.1:pep"/>
    <property type="gene ID" value="SPAC11E3.13c"/>
</dbReference>
<dbReference type="GeneID" id="2542989"/>
<dbReference type="KEGG" id="spo:2542989"/>
<dbReference type="PomBase" id="SPAC11E3.13c">
    <property type="gene designation" value="gas5"/>
</dbReference>
<dbReference type="VEuPathDB" id="FungiDB:SPAC11E3.13c"/>
<dbReference type="eggNOG" id="ENOG502QRZZ">
    <property type="taxonomic scope" value="Eukaryota"/>
</dbReference>
<dbReference type="HOGENOM" id="CLU_021855_1_0_1"/>
<dbReference type="InParanoid" id="O13692"/>
<dbReference type="OMA" id="CADFFAC"/>
<dbReference type="PhylomeDB" id="O13692"/>
<dbReference type="PRO" id="PR:O13692"/>
<dbReference type="Proteomes" id="UP000002485">
    <property type="component" value="Chromosome I"/>
</dbReference>
<dbReference type="GO" id="GO:0009986">
    <property type="term" value="C:cell surface"/>
    <property type="evidence" value="ECO:0000303"/>
    <property type="project" value="PomBase"/>
</dbReference>
<dbReference type="GO" id="GO:0005576">
    <property type="term" value="C:extracellular region"/>
    <property type="evidence" value="ECO:0007669"/>
    <property type="project" value="UniProtKB-KW"/>
</dbReference>
<dbReference type="GO" id="GO:0009277">
    <property type="term" value="C:fungal-type cell wall"/>
    <property type="evidence" value="ECO:0000314"/>
    <property type="project" value="PomBase"/>
</dbReference>
<dbReference type="GO" id="GO:0098552">
    <property type="term" value="C:side of membrane"/>
    <property type="evidence" value="ECO:0007669"/>
    <property type="project" value="UniProtKB-KW"/>
</dbReference>
<dbReference type="GO" id="GO:0042124">
    <property type="term" value="F:1,3-beta-glucanosyltransferase activity"/>
    <property type="evidence" value="ECO:0000314"/>
    <property type="project" value="BHF-UCL"/>
</dbReference>
<dbReference type="GO" id="GO:0034407">
    <property type="term" value="P:cell wall (1-&gt;3)-beta-D-glucan metabolic process"/>
    <property type="evidence" value="ECO:0000315"/>
    <property type="project" value="BHF-UCL"/>
</dbReference>
<dbReference type="GO" id="GO:0071970">
    <property type="term" value="P:fungal-type cell wall (1-&gt;3)-beta-D-glucan biosynthetic process"/>
    <property type="evidence" value="ECO:0000314"/>
    <property type="project" value="PomBase"/>
</dbReference>
<dbReference type="GO" id="GO:0031505">
    <property type="term" value="P:fungal-type cell wall organization"/>
    <property type="evidence" value="ECO:0000318"/>
    <property type="project" value="GO_Central"/>
</dbReference>
<dbReference type="Gene3D" id="3.20.20.80">
    <property type="entry name" value="Glycosidases"/>
    <property type="match status" value="1"/>
</dbReference>
<dbReference type="InterPro" id="IPR004886">
    <property type="entry name" value="Glucanosyltransferase"/>
</dbReference>
<dbReference type="InterPro" id="IPR017853">
    <property type="entry name" value="Glycoside_hydrolase_SF"/>
</dbReference>
<dbReference type="PANTHER" id="PTHR31468">
    <property type="entry name" value="1,3-BETA-GLUCANOSYLTRANSFERASE GAS1"/>
    <property type="match status" value="1"/>
</dbReference>
<dbReference type="PANTHER" id="PTHR31468:SF13">
    <property type="entry name" value="1,3-BETA-GLUCANOSYLTRANSFERASE GAS5"/>
    <property type="match status" value="1"/>
</dbReference>
<dbReference type="Pfam" id="PF03198">
    <property type="entry name" value="Glyco_hydro_72"/>
    <property type="match status" value="1"/>
</dbReference>
<dbReference type="SUPFAM" id="SSF51445">
    <property type="entry name" value="(Trans)glycosidases"/>
    <property type="match status" value="1"/>
</dbReference>
<name>GAS5_SCHPO</name>
<evidence type="ECO:0000250" key="1"/>
<evidence type="ECO:0000250" key="2">
    <source>
        <dbReference type="UniProtKB" id="Q06135"/>
    </source>
</evidence>
<evidence type="ECO:0000255" key="3"/>
<evidence type="ECO:0000256" key="4">
    <source>
        <dbReference type="SAM" id="MobiDB-lite"/>
    </source>
</evidence>
<evidence type="ECO:0000269" key="5">
    <source>
    </source>
</evidence>
<evidence type="ECO:0000305" key="6"/>
<comment type="function">
    <text evidence="1">Splits internally a 1,3-beta-glucan molecule and transfers the newly generated reducing end (the donor) to the non-reducing end of another 1,3-beta-glucan molecule (the acceptor) forming a 1,3-beta linkage, resulting in the elongation of 1,3-beta-glucan chains in the cell wall.</text>
</comment>
<comment type="subcellular location">
    <subcellularLocation>
        <location evidence="5">Secreted</location>
        <location evidence="5">Cell wall</location>
    </subcellularLocation>
    <subcellularLocation>
        <location evidence="5">Membrane</location>
        <topology evidence="5">Lipid-anchor</topology>
        <topology evidence="5">GPI-anchor</topology>
    </subcellularLocation>
    <text>Covalently-linked GPI-modified cell wall protein (GPI-CWP).</text>
</comment>
<comment type="PTM">
    <text>The GPI-anchor is attached to the protein in the endoplasmic reticulum and serves to target the protein to the cell surface. There, the glucosamine-inositol phospholipid moiety is cleaved off and the GPI-modified mannoprotein is covalently attached via its lipidless GPI glycan remnant to the 1,6-beta-glucan of the outer cell wall layer.</text>
</comment>
<comment type="similarity">
    <text evidence="6">Belongs to the glycosyl hydrolase 72 family.</text>
</comment>
<organism>
    <name type="scientific">Schizosaccharomyces pombe (strain 972 / ATCC 24843)</name>
    <name type="common">Fission yeast</name>
    <dbReference type="NCBI Taxonomy" id="284812"/>
    <lineage>
        <taxon>Eukaryota</taxon>
        <taxon>Fungi</taxon>
        <taxon>Dikarya</taxon>
        <taxon>Ascomycota</taxon>
        <taxon>Taphrinomycotina</taxon>
        <taxon>Schizosaccharomycetes</taxon>
        <taxon>Schizosaccharomycetales</taxon>
        <taxon>Schizosaccharomycetaceae</taxon>
        <taxon>Schizosaccharomyces</taxon>
    </lineage>
</organism>
<protein>
    <recommendedName>
        <fullName>1,3-beta-glucanosyltransferase gas5</fullName>
    </recommendedName>
</protein>
<sequence>MNFLHFLTTSLLLLGGSRLALADSASSAIKIKGNAFFNSDTNERFYVRGVDYQPGGSSTLVDPLADTSICKRDLPYLQGLNINTIRVYQVDNSANHDECMSALQDAGIYVILDLATSSNSISRLDAASSYNAVFLQGIFATIDAFKNYTNVLGFFAGNEVANTAENSATTTWVKAALRDAKEYISKNSDRDIPVGYSAADVAEIRVQCADFFACGNSSVRADFYGMNMYEWCGADSSFTISGYDQRMEEFANYSIPLFLSEYGCNDVTKESDGTPDRPFDEVDAIFSSEMSSVFSGGLVYQYSEEGNNYGLVVIDGDNVTISKNYETLKEKYASAANYTGDGDYSSSPATLTCPADDSYFTSFPLPTMPSEAKGFIESGAGQPLGFNAPSNQEFSANATALVSPGPHSVSTTINTNIVQATISQSSTSGSSSGSSSASTTASSSSVSSGSSISSGSSSMSTSYTSASGSSAHSSGSSSGSSSATSSASTFNLSRFYVFAGILAISGLVFA</sequence>
<feature type="signal peptide" evidence="3">
    <location>
        <begin position="1"/>
        <end position="22"/>
    </location>
</feature>
<feature type="chain" id="PRO_0000010492" description="1,3-beta-glucanosyltransferase gas5">
    <location>
        <begin position="23"/>
        <end position="485"/>
    </location>
</feature>
<feature type="propeptide" id="PRO_0000377427" description="Removed in mature form" evidence="3">
    <location>
        <begin position="486"/>
        <end position="510"/>
    </location>
</feature>
<feature type="region of interest" description="Disordered" evidence="4">
    <location>
        <begin position="424"/>
        <end position="456"/>
    </location>
</feature>
<feature type="active site" description="Proton donor" evidence="1">
    <location>
        <position position="159"/>
    </location>
</feature>
<feature type="active site" description="Nucleophile" evidence="1">
    <location>
        <position position="261"/>
    </location>
</feature>
<feature type="binding site" evidence="2">
    <location>
        <position position="88"/>
    </location>
    <ligand>
        <name>(1,3-beta-D-glucosyl)n</name>
        <dbReference type="ChEBI" id="CHEBI:37671"/>
        <label>1</label>
        <note>donor substrate</note>
    </ligand>
</feature>
<feature type="binding site" evidence="2">
    <location>
        <position position="158"/>
    </location>
    <ligand>
        <name>(1,3-beta-D-glucosyl)n</name>
        <dbReference type="ChEBI" id="CHEBI:37671"/>
        <label>1</label>
        <note>donor substrate</note>
    </ligand>
</feature>
<feature type="binding site" evidence="2">
    <location>
        <position position="159"/>
    </location>
    <ligand>
        <name>(1,3-beta-D-glucosyl)n</name>
        <dbReference type="ChEBI" id="CHEBI:37671"/>
        <label>2</label>
        <note>acceptor substrate</note>
    </ligand>
</feature>
<feature type="binding site" evidence="2">
    <location>
        <position position="200"/>
    </location>
    <ligand>
        <name>(1,3-beta-D-glucosyl)n</name>
        <dbReference type="ChEBI" id="CHEBI:37671"/>
        <label>2</label>
        <note>acceptor substrate</note>
    </ligand>
</feature>
<feature type="binding site" evidence="2">
    <location>
        <position position="205"/>
    </location>
    <ligand>
        <name>(1,3-beta-D-glucosyl)n</name>
        <dbReference type="ChEBI" id="CHEBI:37671"/>
        <label>2</label>
        <note>acceptor substrate</note>
    </ligand>
</feature>
<feature type="binding site" evidence="2">
    <location>
        <position position="300"/>
    </location>
    <ligand>
        <name>(1,3-beta-D-glucosyl)n</name>
        <dbReference type="ChEBI" id="CHEBI:37671"/>
        <label>1</label>
        <note>donor substrate</note>
    </ligand>
</feature>
<feature type="lipid moiety-binding region" description="GPI-anchor amidated serine" evidence="3">
    <location>
        <position position="485"/>
    </location>
</feature>
<feature type="glycosylation site" description="N-linked (GlcNAc...) asparagine" evidence="3">
    <location>
        <position position="147"/>
    </location>
</feature>
<feature type="glycosylation site" description="N-linked (GlcNAc...) asparagine" evidence="3">
    <location>
        <position position="216"/>
    </location>
</feature>
<feature type="glycosylation site" description="N-linked (GlcNAc...) asparagine" evidence="3">
    <location>
        <position position="252"/>
    </location>
</feature>
<feature type="glycosylation site" description="N-linked (GlcNAc...) asparagine" evidence="3">
    <location>
        <position position="318"/>
    </location>
</feature>
<feature type="glycosylation site" description="N-linked (GlcNAc...) asparagine" evidence="3">
    <location>
        <position position="337"/>
    </location>
</feature>
<feature type="glycosylation site" description="N-linked (GlcNAc...) asparagine" evidence="3">
    <location>
        <position position="397"/>
    </location>
</feature>
<feature type="glycosylation site" description="N-linked (GlcNAc...) asparagine" evidence="3">
    <location>
        <position position="491"/>
    </location>
</feature>
<feature type="disulfide bond" evidence="2">
    <location>
        <begin position="70"/>
        <end position="99"/>
    </location>
</feature>
<feature type="disulfide bond" evidence="2">
    <location>
        <begin position="214"/>
        <end position="353"/>
    </location>
</feature>
<feature type="disulfide bond" evidence="2">
    <location>
        <begin position="232"/>
        <end position="264"/>
    </location>
</feature>
<proteinExistence type="evidence at protein level"/>
<accession>O13692</accession>
<keyword id="KW-0134">Cell wall</keyword>
<keyword id="KW-0961">Cell wall biogenesis/degradation</keyword>
<keyword id="KW-1015">Disulfide bond</keyword>
<keyword id="KW-0325">Glycoprotein</keyword>
<keyword id="KW-0336">GPI-anchor</keyword>
<keyword id="KW-0449">Lipoprotein</keyword>
<keyword id="KW-0472">Membrane</keyword>
<keyword id="KW-1185">Reference proteome</keyword>
<keyword id="KW-0964">Secreted</keyword>
<keyword id="KW-0732">Signal</keyword>
<keyword id="KW-0808">Transferase</keyword>